<keyword id="KW-1003">Cell membrane</keyword>
<keyword id="KW-0217">Developmental protein</keyword>
<keyword id="KW-0221">Differentiation</keyword>
<keyword id="KW-0325">Glycoprotein</keyword>
<keyword id="KW-0336">GPI-anchor</keyword>
<keyword id="KW-0449">Lipoprotein</keyword>
<keyword id="KW-0472">Membrane</keyword>
<keyword id="KW-1185">Reference proteome</keyword>
<keyword id="KW-0732">Signal</keyword>
<accession>Q07490</accession>
<accession>Q0P5T1</accession>
<feature type="signal peptide" evidence="4">
    <location>
        <begin position="1"/>
        <end position="26"/>
    </location>
</feature>
<feature type="peptide" id="PRO_0000020897" description="Signal transducer CD24">
    <location>
        <begin position="27"/>
        <end position="56"/>
    </location>
</feature>
<feature type="propeptide" id="PRO_0000020898" description="Removed in mature form" evidence="1">
    <location>
        <begin position="57"/>
        <end position="76"/>
    </location>
</feature>
<feature type="lipid moiety-binding region" description="GPI-anchor amidated serine" evidence="4">
    <location>
        <position position="56"/>
    </location>
</feature>
<feature type="glycosylation site" description="N-linked (GlcNAc...) asparagine" evidence="4">
    <location>
        <position position="27"/>
    </location>
</feature>
<feature type="glycosylation site" description="N-linked (GlcNAc...) asparagine" evidence="4">
    <location>
        <position position="37"/>
    </location>
</feature>
<feature type="glycosylation site" description="N-linked (GlcNAc...) asparagine" evidence="4">
    <location>
        <position position="48"/>
    </location>
</feature>
<evidence type="ECO:0000250" key="1"/>
<evidence type="ECO:0000250" key="2">
    <source>
        <dbReference type="UniProtKB" id="P24807"/>
    </source>
</evidence>
<evidence type="ECO:0000250" key="3">
    <source>
        <dbReference type="UniProtKB" id="P25063"/>
    </source>
</evidence>
<evidence type="ECO:0000255" key="4"/>
<evidence type="ECO:0000305" key="5"/>
<sequence>MGRAMVVRLGLGLLLLALLLPTQIYCNQTSVAPFSGNQSISAAPNPTNATTRSGCSSLQSTAGLLALSLSLLHLYC</sequence>
<reference key="1">
    <citation type="journal article" date="1993" name="Dev. Dyn.">
        <title>Gene expression of CD24 core peptide molecule in developing brain and developing non-neural tissues.</title>
        <authorList>
            <person name="Shirasawa T."/>
            <person name="Akashi T."/>
            <person name="Sakamoto K."/>
            <person name="Takahashi H."/>
            <person name="Maruyama N."/>
            <person name="Hirokawa K."/>
        </authorList>
    </citation>
    <scope>NUCLEOTIDE SEQUENCE [MRNA]</scope>
    <source>
        <strain>Wistar</strain>
        <tissue>Embryonic brain</tissue>
    </source>
</reference>
<reference key="2">
    <citation type="journal article" date="1996" name="J. Cell Sci.">
        <title>CD24 (heat stable antigen, nectadrin), a novel keratinocyte differentiation marker, is preferentially expressed in areas of the hair follicle containing the colony-forming cells.</title>
        <authorList>
            <person name="Magnaldo T.A."/>
            <person name="Barrandon Y."/>
        </authorList>
    </citation>
    <scope>NUCLEOTIDE SEQUENCE [MRNA]</scope>
    <source>
        <strain>Fischer</strain>
    </source>
</reference>
<reference key="3">
    <citation type="journal article" date="2004" name="Genome Res.">
        <title>The status, quality, and expansion of the NIH full-length cDNA project: the Mammalian Gene Collection (MGC).</title>
        <authorList>
            <consortium name="The MGC Project Team"/>
        </authorList>
    </citation>
    <scope>NUCLEOTIDE SEQUENCE [LARGE SCALE MRNA]</scope>
    <source>
        <tissue>Kidney</tissue>
        <tissue>Prostate</tissue>
    </source>
</reference>
<gene>
    <name type="primary">Cd24</name>
    <name type="synonym">Cd24a</name>
</gene>
<proteinExistence type="evidence at transcript level"/>
<comment type="function">
    <text evidence="2 3">May have a pivotal role in cell differentiation of different cell types. Signaling could be triggered by the binding of a lectin-like ligand to the CD24 carbohydrates, and transduced by the release of second messengers derived from the GPI-anchor. Modulates B-cell activation responses. In association with SIGLEC10 may be involved in the selective suppression of the immune response to danger-associated molecular patterns (DAMPs) such as HMGB1, HSP70 and HSP90. Plays a role in the control of autoimmunity (By similarity).</text>
</comment>
<comment type="subcellular location">
    <subcellularLocation>
        <location>Cell membrane</location>
        <topology>Lipid-anchor</topology>
        <topology>GPI-anchor</topology>
    </subcellularLocation>
</comment>
<comment type="tissue specificity">
    <text>Expressed in the central nervous system, in postmitotic cells of spinal cord, hindbrain, midbrain and forebrain. Expressed in epithelium during the development of non-neural tissues. Expressed in tooth development, specifically in mesenchymal cells differentiating into odontoblast in dental papilla, as well as in the developing eye and hair follicle.</text>
</comment>
<comment type="developmental stage">
    <text>Detected in primitive ectoderm, mesoderm and ventral endoderm; down-regulated when organogenesis is completed.</text>
</comment>
<comment type="PTM">
    <text evidence="1">Extensively O-glycosylated (By similarity). The carbohydrate structure may be regulated in a tissue-specific and developmental stage-specific manner.</text>
</comment>
<comment type="similarity">
    <text evidence="5">Belongs to the CD24 family.</text>
</comment>
<name>CD24_RAT</name>
<protein>
    <recommendedName>
        <fullName>Signal transducer CD24</fullName>
    </recommendedName>
    <alternativeName>
        <fullName>Heat-stable antigen</fullName>
        <shortName>HSA</shortName>
    </alternativeName>
    <alternativeName>
        <fullName>Nectadrin</fullName>
    </alternativeName>
    <cdAntigenName>CD24</cdAntigenName>
</protein>
<dbReference type="EMBL" id="Z11663">
    <property type="protein sequence ID" value="CAA77731.1"/>
    <property type="molecule type" value="mRNA"/>
</dbReference>
<dbReference type="EMBL" id="U49062">
    <property type="protein sequence ID" value="AAA91470.1"/>
    <property type="molecule type" value="mRNA"/>
</dbReference>
<dbReference type="EMBL" id="BC064439">
    <property type="protein sequence ID" value="AAH64439.1"/>
    <property type="molecule type" value="mRNA"/>
</dbReference>
<dbReference type="EMBL" id="BC081851">
    <property type="protein sequence ID" value="AAH81851.1"/>
    <property type="molecule type" value="mRNA"/>
</dbReference>
<dbReference type="PIR" id="I53107">
    <property type="entry name" value="I53107"/>
</dbReference>
<dbReference type="RefSeq" id="NP_036884.1">
    <property type="nucleotide sequence ID" value="NM_012752.3"/>
</dbReference>
<dbReference type="RefSeq" id="XP_063135042.1">
    <property type="nucleotide sequence ID" value="XM_063278972.1"/>
</dbReference>
<dbReference type="FunCoup" id="Q07490">
    <property type="interactions" value="77"/>
</dbReference>
<dbReference type="STRING" id="10116.ENSRNOP00000000352"/>
<dbReference type="GlyCosmos" id="Q07490">
    <property type="glycosylation" value="3 sites, No reported glycans"/>
</dbReference>
<dbReference type="GlyGen" id="Q07490">
    <property type="glycosylation" value="3 sites"/>
</dbReference>
<dbReference type="PaxDb" id="10116-ENSRNOP00000000352"/>
<dbReference type="GeneID" id="25145"/>
<dbReference type="KEGG" id="rno:25145"/>
<dbReference type="UCSC" id="RGD:2298">
    <property type="organism name" value="rat"/>
</dbReference>
<dbReference type="AGR" id="RGD:2298"/>
<dbReference type="CTD" id="100133941"/>
<dbReference type="RGD" id="2298">
    <property type="gene designation" value="Cd24"/>
</dbReference>
<dbReference type="VEuPathDB" id="HostDB:ENSRNOG00000000321"/>
<dbReference type="eggNOG" id="ENOG502RVSX">
    <property type="taxonomic scope" value="Eukaryota"/>
</dbReference>
<dbReference type="HOGENOM" id="CLU_198463_1_0_1"/>
<dbReference type="InParanoid" id="Q07490"/>
<dbReference type="OrthoDB" id="91366at9989"/>
<dbReference type="PhylomeDB" id="Q07490"/>
<dbReference type="TreeFam" id="TF338512"/>
<dbReference type="PRO" id="PR:Q07490"/>
<dbReference type="Proteomes" id="UP000002494">
    <property type="component" value="Chromosome 20"/>
</dbReference>
<dbReference type="Bgee" id="ENSRNOG00000000321">
    <property type="expression patterns" value="Expressed in colon and 20 other cell types or tissues"/>
</dbReference>
<dbReference type="GO" id="GO:0009986">
    <property type="term" value="C:cell surface"/>
    <property type="evidence" value="ECO:0000250"/>
    <property type="project" value="UniProtKB"/>
</dbReference>
<dbReference type="GO" id="GO:0060170">
    <property type="term" value="C:ciliary membrane"/>
    <property type="evidence" value="ECO:0000266"/>
    <property type="project" value="RGD"/>
</dbReference>
<dbReference type="GO" id="GO:0009897">
    <property type="term" value="C:external side of plasma membrane"/>
    <property type="evidence" value="ECO:0000314"/>
    <property type="project" value="MGI"/>
</dbReference>
<dbReference type="GO" id="GO:0016020">
    <property type="term" value="C:membrane"/>
    <property type="evidence" value="ECO:0000250"/>
    <property type="project" value="UniProtKB"/>
</dbReference>
<dbReference type="GO" id="GO:0045121">
    <property type="term" value="C:membrane raft"/>
    <property type="evidence" value="ECO:0000250"/>
    <property type="project" value="UniProtKB"/>
</dbReference>
<dbReference type="GO" id="GO:0031528">
    <property type="term" value="C:microvillus membrane"/>
    <property type="evidence" value="ECO:0000266"/>
    <property type="project" value="RGD"/>
</dbReference>
<dbReference type="GO" id="GO:0031514">
    <property type="term" value="C:motile cilium"/>
    <property type="evidence" value="ECO:0000266"/>
    <property type="project" value="RGD"/>
</dbReference>
<dbReference type="GO" id="GO:0005886">
    <property type="term" value="C:plasma membrane"/>
    <property type="evidence" value="ECO:0000266"/>
    <property type="project" value="RGD"/>
</dbReference>
<dbReference type="GO" id="GO:0098793">
    <property type="term" value="C:presynapse"/>
    <property type="evidence" value="ECO:0007669"/>
    <property type="project" value="GOC"/>
</dbReference>
<dbReference type="GO" id="GO:0030246">
    <property type="term" value="F:carbohydrate binding"/>
    <property type="evidence" value="ECO:0000266"/>
    <property type="project" value="RGD"/>
</dbReference>
<dbReference type="GO" id="GO:0030544">
    <property type="term" value="F:Hsp70 protein binding"/>
    <property type="evidence" value="ECO:0000266"/>
    <property type="project" value="RGD"/>
</dbReference>
<dbReference type="GO" id="GO:0051879">
    <property type="term" value="F:Hsp90 protein binding"/>
    <property type="evidence" value="ECO:0000266"/>
    <property type="project" value="RGD"/>
</dbReference>
<dbReference type="GO" id="GO:0019901">
    <property type="term" value="F:protein kinase binding"/>
    <property type="evidence" value="ECO:0000250"/>
    <property type="project" value="UniProtKB"/>
</dbReference>
<dbReference type="GO" id="GO:0030296">
    <property type="term" value="F:protein tyrosine kinase activator activity"/>
    <property type="evidence" value="ECO:0000250"/>
    <property type="project" value="UniProtKB"/>
</dbReference>
<dbReference type="GO" id="GO:0008637">
    <property type="term" value="P:apoptotic mitochondrial changes"/>
    <property type="evidence" value="ECO:0000266"/>
    <property type="project" value="RGD"/>
</dbReference>
<dbReference type="GO" id="GO:0030262">
    <property type="term" value="P:apoptotic nuclear changes"/>
    <property type="evidence" value="ECO:0000266"/>
    <property type="project" value="RGD"/>
</dbReference>
<dbReference type="GO" id="GO:0097190">
    <property type="term" value="P:apoptotic signaling pathway"/>
    <property type="evidence" value="ECO:0000266"/>
    <property type="project" value="RGD"/>
</dbReference>
<dbReference type="GO" id="GO:0001783">
    <property type="term" value="P:B cell apoptotic process"/>
    <property type="evidence" value="ECO:0000266"/>
    <property type="project" value="RGD"/>
</dbReference>
<dbReference type="GO" id="GO:0042100">
    <property type="term" value="P:B cell proliferation"/>
    <property type="evidence" value="ECO:0000266"/>
    <property type="project" value="RGD"/>
</dbReference>
<dbReference type="GO" id="GO:0032597">
    <property type="term" value="P:B cell receptor transport into membrane raft"/>
    <property type="evidence" value="ECO:0000250"/>
    <property type="project" value="UniProtKB"/>
</dbReference>
<dbReference type="GO" id="GO:0019722">
    <property type="term" value="P:calcium-mediated signaling"/>
    <property type="evidence" value="ECO:0000266"/>
    <property type="project" value="RGD"/>
</dbReference>
<dbReference type="GO" id="GO:0035739">
    <property type="term" value="P:CD4-positive, alpha-beta T cell proliferation"/>
    <property type="evidence" value="ECO:0000266"/>
    <property type="project" value="RGD"/>
</dbReference>
<dbReference type="GO" id="GO:0001775">
    <property type="term" value="P:cell activation"/>
    <property type="evidence" value="ECO:0000250"/>
    <property type="project" value="UniProtKB"/>
</dbReference>
<dbReference type="GO" id="GO:0016477">
    <property type="term" value="P:cell migration"/>
    <property type="evidence" value="ECO:0000250"/>
    <property type="project" value="UniProtKB"/>
</dbReference>
<dbReference type="GO" id="GO:0007166">
    <property type="term" value="P:cell surface receptor signaling pathway"/>
    <property type="evidence" value="ECO:0000266"/>
    <property type="project" value="RGD"/>
</dbReference>
<dbReference type="GO" id="GO:0032600">
    <property type="term" value="P:chemokine receptor transport out of membrane raft"/>
    <property type="evidence" value="ECO:0000250"/>
    <property type="project" value="UniProtKB"/>
</dbReference>
<dbReference type="GO" id="GO:0042632">
    <property type="term" value="P:cholesterol homeostasis"/>
    <property type="evidence" value="ECO:0000250"/>
    <property type="project" value="UniProtKB"/>
</dbReference>
<dbReference type="GO" id="GO:0072139">
    <property type="term" value="P:glomerular parietal epithelial cell differentiation"/>
    <property type="evidence" value="ECO:0000250"/>
    <property type="project" value="UniProtKB"/>
</dbReference>
<dbReference type="GO" id="GO:0007157">
    <property type="term" value="P:heterophilic cell-cell adhesion via plasma membrane cell adhesion molecules"/>
    <property type="evidence" value="ECO:0000266"/>
    <property type="project" value="RGD"/>
</dbReference>
<dbReference type="GO" id="GO:0034109">
    <property type="term" value="P:homotypic cell-cell adhesion"/>
    <property type="evidence" value="ECO:0000266"/>
    <property type="project" value="RGD"/>
</dbReference>
<dbReference type="GO" id="GO:0006955">
    <property type="term" value="P:immune response"/>
    <property type="evidence" value="ECO:0000270"/>
    <property type="project" value="RGD"/>
</dbReference>
<dbReference type="GO" id="GO:0033622">
    <property type="term" value="P:integrin activation"/>
    <property type="evidence" value="ECO:0000266"/>
    <property type="project" value="RGD"/>
</dbReference>
<dbReference type="GO" id="GO:0007159">
    <property type="term" value="P:leukocyte cell-cell adhesion"/>
    <property type="evidence" value="ECO:0000266"/>
    <property type="project" value="RGD"/>
</dbReference>
<dbReference type="GO" id="GO:0002523">
    <property type="term" value="P:leukocyte migration involved in inflammatory response"/>
    <property type="evidence" value="ECO:0000266"/>
    <property type="project" value="RGD"/>
</dbReference>
<dbReference type="GO" id="GO:0030889">
    <property type="term" value="P:negative regulation of B cell proliferation"/>
    <property type="evidence" value="ECO:0000266"/>
    <property type="project" value="RGD"/>
</dbReference>
<dbReference type="GO" id="GO:0034119">
    <property type="term" value="P:negative regulation of erythrocyte aggregation"/>
    <property type="evidence" value="ECO:0000266"/>
    <property type="project" value="RGD"/>
</dbReference>
<dbReference type="GO" id="GO:0034107">
    <property type="term" value="P:negative regulation of erythrocyte clearance"/>
    <property type="evidence" value="ECO:0000266"/>
    <property type="project" value="RGD"/>
</dbReference>
<dbReference type="GO" id="GO:0106015">
    <property type="term" value="P:negative regulation of inflammatory response to wounding"/>
    <property type="evidence" value="ECO:0000266"/>
    <property type="project" value="RGD"/>
</dbReference>
<dbReference type="GO" id="GO:0032715">
    <property type="term" value="P:negative regulation of interleukin-6 production"/>
    <property type="evidence" value="ECO:0000266"/>
    <property type="project" value="RGD"/>
</dbReference>
<dbReference type="GO" id="GO:0071638">
    <property type="term" value="P:negative regulation of monocyte chemotactic protein-1 production"/>
    <property type="evidence" value="ECO:0000266"/>
    <property type="project" value="RGD"/>
</dbReference>
<dbReference type="GO" id="GO:0007406">
    <property type="term" value="P:negative regulation of neuroblast proliferation"/>
    <property type="evidence" value="ECO:0000266"/>
    <property type="project" value="RGD"/>
</dbReference>
<dbReference type="GO" id="GO:0050768">
    <property type="term" value="P:negative regulation of neurogenesis"/>
    <property type="evidence" value="ECO:0000266"/>
    <property type="project" value="RGD"/>
</dbReference>
<dbReference type="GO" id="GO:0045665">
    <property type="term" value="P:negative regulation of neuron differentiation"/>
    <property type="evidence" value="ECO:0000266"/>
    <property type="project" value="RGD"/>
</dbReference>
<dbReference type="GO" id="GO:0046014">
    <property type="term" value="P:negative regulation of T cell homeostatic proliferation"/>
    <property type="evidence" value="ECO:0000266"/>
    <property type="project" value="RGD"/>
</dbReference>
<dbReference type="GO" id="GO:0032913">
    <property type="term" value="P:negative regulation of transforming growth factor beta3 production"/>
    <property type="evidence" value="ECO:0000250"/>
    <property type="project" value="UniProtKB"/>
</dbReference>
<dbReference type="GO" id="GO:0032720">
    <property type="term" value="P:negative regulation of tumor necrosis factor production"/>
    <property type="evidence" value="ECO:0000266"/>
    <property type="project" value="RGD"/>
</dbReference>
<dbReference type="GO" id="GO:0007405">
    <property type="term" value="P:neuroblast proliferation"/>
    <property type="evidence" value="ECO:0000266"/>
    <property type="project" value="RGD"/>
</dbReference>
<dbReference type="GO" id="GO:0007274">
    <property type="term" value="P:neuromuscular synaptic transmission"/>
    <property type="evidence" value="ECO:0000266"/>
    <property type="project" value="RGD"/>
</dbReference>
<dbReference type="GO" id="GO:0031175">
    <property type="term" value="P:neuron projection development"/>
    <property type="evidence" value="ECO:0000266"/>
    <property type="project" value="RGD"/>
</dbReference>
<dbReference type="GO" id="GO:0072112">
    <property type="term" value="P:podocyte differentiation"/>
    <property type="evidence" value="ECO:0000250"/>
    <property type="project" value="UniProtKB"/>
</dbReference>
<dbReference type="GO" id="GO:0042104">
    <property type="term" value="P:positive regulation of activated T cell proliferation"/>
    <property type="evidence" value="ECO:0000250"/>
    <property type="project" value="UniProtKB"/>
</dbReference>
<dbReference type="GO" id="GO:0046641">
    <property type="term" value="P:positive regulation of alpha-beta T cell proliferation"/>
    <property type="evidence" value="ECO:0000266"/>
    <property type="project" value="RGD"/>
</dbReference>
<dbReference type="GO" id="GO:0002904">
    <property type="term" value="P:positive regulation of B cell apoptotic process"/>
    <property type="evidence" value="ECO:0000266"/>
    <property type="project" value="RGD"/>
</dbReference>
<dbReference type="GO" id="GO:0050850">
    <property type="term" value="P:positive regulation of calcium-mediated signaling"/>
    <property type="evidence" value="ECO:0000266"/>
    <property type="project" value="RGD"/>
</dbReference>
<dbReference type="GO" id="GO:2000563">
    <property type="term" value="P:positive regulation of CD4-positive, alpha-beta T cell proliferation"/>
    <property type="evidence" value="ECO:0000266"/>
    <property type="project" value="RGD"/>
</dbReference>
<dbReference type="GO" id="GO:0033630">
    <property type="term" value="P:positive regulation of cell adhesion mediated by integrin"/>
    <property type="evidence" value="ECO:0000266"/>
    <property type="project" value="RGD"/>
</dbReference>
<dbReference type="GO" id="GO:0022409">
    <property type="term" value="P:positive regulation of cell-cell adhesion"/>
    <property type="evidence" value="ECO:0000266"/>
    <property type="project" value="RGD"/>
</dbReference>
<dbReference type="GO" id="GO:0033634">
    <property type="term" value="P:positive regulation of cell-cell adhesion mediated by integrin"/>
    <property type="evidence" value="ECO:0000266"/>
    <property type="project" value="RGD"/>
</dbReference>
<dbReference type="GO" id="GO:0007204">
    <property type="term" value="P:positive regulation of cytosolic calcium ion concentration"/>
    <property type="evidence" value="ECO:0000250"/>
    <property type="project" value="UniProtKB"/>
</dbReference>
<dbReference type="GO" id="GO:0002863">
    <property type="term" value="P:positive regulation of inflammatory response to antigenic stimulus"/>
    <property type="evidence" value="ECO:0000266"/>
    <property type="project" value="RGD"/>
</dbReference>
<dbReference type="GO" id="GO:0106016">
    <property type="term" value="P:positive regulation of inflammatory response to wounding"/>
    <property type="evidence" value="ECO:0000266"/>
    <property type="project" value="RGD"/>
</dbReference>
<dbReference type="GO" id="GO:0033625">
    <property type="term" value="P:positive regulation of integrin activation"/>
    <property type="evidence" value="ECO:0000266"/>
    <property type="project" value="RGD"/>
</dbReference>
<dbReference type="GO" id="GO:2000768">
    <property type="term" value="P:positive regulation of nephron tubule epithelial cell differentiation"/>
    <property type="evidence" value="ECO:0000250"/>
    <property type="project" value="UniProtKB"/>
</dbReference>
<dbReference type="GO" id="GO:0010976">
    <property type="term" value="P:positive regulation of neuron projection development"/>
    <property type="evidence" value="ECO:0000266"/>
    <property type="project" value="RGD"/>
</dbReference>
<dbReference type="GO" id="GO:0042103">
    <property type="term" value="P:positive regulation of T cell homeostatic proliferation"/>
    <property type="evidence" value="ECO:0000266"/>
    <property type="project" value="RGD"/>
</dbReference>
<dbReference type="GO" id="GO:0002842">
    <property type="term" value="P:positive regulation of T cell mediated immune response to tumor cell"/>
    <property type="evidence" value="ECO:0000266"/>
    <property type="project" value="RGD"/>
</dbReference>
<dbReference type="GO" id="GO:0002329">
    <property type="term" value="P:pre-B cell differentiation"/>
    <property type="evidence" value="ECO:0000266"/>
    <property type="project" value="RGD"/>
</dbReference>
<dbReference type="GO" id="GO:0045577">
    <property type="term" value="P:regulation of B cell differentiation"/>
    <property type="evidence" value="ECO:0000266"/>
    <property type="project" value="RGD"/>
</dbReference>
<dbReference type="GO" id="GO:0022407">
    <property type="term" value="P:regulation of cell-cell adhesion"/>
    <property type="evidence" value="ECO:0000266"/>
    <property type="project" value="RGD"/>
</dbReference>
<dbReference type="GO" id="GO:0033632">
    <property type="term" value="P:regulation of cell-cell adhesion mediated by integrin"/>
    <property type="evidence" value="ECO:0000266"/>
    <property type="project" value="RGD"/>
</dbReference>
<dbReference type="GO" id="GO:0001959">
    <property type="term" value="P:regulation of cytokine-mediated signaling pathway"/>
    <property type="evidence" value="ECO:0000250"/>
    <property type="project" value="UniProtKB"/>
</dbReference>
<dbReference type="GO" id="GO:0043408">
    <property type="term" value="P:regulation of MAPK cascade"/>
    <property type="evidence" value="ECO:0000250"/>
    <property type="project" value="UniProtKB"/>
</dbReference>
<dbReference type="GO" id="GO:0045730">
    <property type="term" value="P:respiratory burst"/>
    <property type="evidence" value="ECO:0000250"/>
    <property type="project" value="UniProtKB"/>
</dbReference>
<dbReference type="GO" id="GO:0043627">
    <property type="term" value="P:response to estrogen"/>
    <property type="evidence" value="ECO:0000250"/>
    <property type="project" value="UniProtKB"/>
</dbReference>
<dbReference type="GO" id="GO:0001666">
    <property type="term" value="P:response to hypoxia"/>
    <property type="evidence" value="ECO:0000250"/>
    <property type="project" value="UniProtKB"/>
</dbReference>
<dbReference type="GO" id="GO:0002237">
    <property type="term" value="P:response to molecule of bacterial origin"/>
    <property type="evidence" value="ECO:0000250"/>
    <property type="project" value="UniProtKB"/>
</dbReference>
<dbReference type="GO" id="GO:0048488">
    <property type="term" value="P:synaptic vesicle endocytosis"/>
    <property type="evidence" value="ECO:0000266"/>
    <property type="project" value="RGD"/>
</dbReference>
<dbReference type="GO" id="GO:0031295">
    <property type="term" value="P:T cell costimulation"/>
    <property type="evidence" value="ECO:0000250"/>
    <property type="project" value="UniProtKB"/>
</dbReference>
<dbReference type="GO" id="GO:0001777">
    <property type="term" value="P:T cell homeostatic proliferation"/>
    <property type="evidence" value="ECO:0000266"/>
    <property type="project" value="RGD"/>
</dbReference>
<dbReference type="InterPro" id="IPR028029">
    <property type="entry name" value="CD24"/>
</dbReference>
<dbReference type="PANTHER" id="PTHR16676">
    <property type="entry name" value="SIGNAL TRANSDUCER CD24"/>
    <property type="match status" value="1"/>
</dbReference>
<dbReference type="PANTHER" id="PTHR16676:SF0">
    <property type="entry name" value="SIGNAL TRANSDUCER CD24"/>
    <property type="match status" value="1"/>
</dbReference>
<dbReference type="Pfam" id="PF14984">
    <property type="entry name" value="CD24"/>
    <property type="match status" value="1"/>
</dbReference>
<organism>
    <name type="scientific">Rattus norvegicus</name>
    <name type="common">Rat</name>
    <dbReference type="NCBI Taxonomy" id="10116"/>
    <lineage>
        <taxon>Eukaryota</taxon>
        <taxon>Metazoa</taxon>
        <taxon>Chordata</taxon>
        <taxon>Craniata</taxon>
        <taxon>Vertebrata</taxon>
        <taxon>Euteleostomi</taxon>
        <taxon>Mammalia</taxon>
        <taxon>Eutheria</taxon>
        <taxon>Euarchontoglires</taxon>
        <taxon>Glires</taxon>
        <taxon>Rodentia</taxon>
        <taxon>Myomorpha</taxon>
        <taxon>Muroidea</taxon>
        <taxon>Muridae</taxon>
        <taxon>Murinae</taxon>
        <taxon>Rattus</taxon>
    </lineage>
</organism>